<comment type="function">
    <text evidence="1">Regulatory subunit of a potassium efflux system that confers protection against electrophiles. Required for full activity of KefC. Shows redox enzymatic activity, but this enzymatic activity is not required for activation of KefC.</text>
</comment>
<comment type="catalytic activity">
    <reaction evidence="1">
        <text>a quinone + NADH + H(+) = a quinol + NAD(+)</text>
        <dbReference type="Rhea" id="RHEA:46160"/>
        <dbReference type="ChEBI" id="CHEBI:15378"/>
        <dbReference type="ChEBI" id="CHEBI:24646"/>
        <dbReference type="ChEBI" id="CHEBI:57540"/>
        <dbReference type="ChEBI" id="CHEBI:57945"/>
        <dbReference type="ChEBI" id="CHEBI:132124"/>
        <dbReference type="EC" id="1.6.5.2"/>
    </reaction>
</comment>
<comment type="catalytic activity">
    <reaction evidence="1">
        <text>a quinone + NADPH + H(+) = a quinol + NADP(+)</text>
        <dbReference type="Rhea" id="RHEA:46164"/>
        <dbReference type="ChEBI" id="CHEBI:15378"/>
        <dbReference type="ChEBI" id="CHEBI:24646"/>
        <dbReference type="ChEBI" id="CHEBI:57783"/>
        <dbReference type="ChEBI" id="CHEBI:58349"/>
        <dbReference type="ChEBI" id="CHEBI:132124"/>
        <dbReference type="EC" id="1.6.5.2"/>
    </reaction>
</comment>
<comment type="cofactor">
    <cofactor evidence="1">
        <name>FMN</name>
        <dbReference type="ChEBI" id="CHEBI:58210"/>
    </cofactor>
</comment>
<comment type="subunit">
    <text evidence="1">Homodimer. Interacts with KefC.</text>
</comment>
<comment type="subcellular location">
    <subcellularLocation>
        <location evidence="1">Cell inner membrane</location>
        <topology evidence="1">Peripheral membrane protein</topology>
        <orientation evidence="1">Cytoplasmic side</orientation>
    </subcellularLocation>
</comment>
<comment type="similarity">
    <text evidence="1">Belongs to the NAD(P)H dehydrogenase (quinone) family. KefF subfamily.</text>
</comment>
<reference key="1">
    <citation type="journal article" date="2005" name="Nucleic Acids Res.">
        <title>The genome sequence of Salmonella enterica serovar Choleraesuis, a highly invasive and resistant zoonotic pathogen.</title>
        <authorList>
            <person name="Chiu C.-H."/>
            <person name="Tang P."/>
            <person name="Chu C."/>
            <person name="Hu S."/>
            <person name="Bao Q."/>
            <person name="Yu J."/>
            <person name="Chou Y.-Y."/>
            <person name="Wang H.-S."/>
            <person name="Lee Y.-S."/>
        </authorList>
    </citation>
    <scope>NUCLEOTIDE SEQUENCE [LARGE SCALE GENOMIC DNA]</scope>
    <source>
        <strain>SC-B67</strain>
    </source>
</reference>
<feature type="chain" id="PRO_1000068469" description="Glutathione-regulated potassium-efflux system ancillary protein KefF">
    <location>
        <begin position="1"/>
        <end position="176"/>
    </location>
</feature>
<feature type="binding site" evidence="1">
    <location>
        <position position="8"/>
    </location>
    <ligand>
        <name>FMN</name>
        <dbReference type="ChEBI" id="CHEBI:58210"/>
    </ligand>
</feature>
<feature type="binding site" evidence="1">
    <location>
        <begin position="14"/>
        <end position="17"/>
    </location>
    <ligand>
        <name>FMN</name>
        <dbReference type="ChEBI" id="CHEBI:58210"/>
    </ligand>
</feature>
<feature type="binding site" evidence="1">
    <location>
        <begin position="65"/>
        <end position="68"/>
    </location>
    <ligand>
        <name>FMN</name>
        <dbReference type="ChEBI" id="CHEBI:58210"/>
    </ligand>
</feature>
<feature type="binding site" evidence="1">
    <location>
        <begin position="105"/>
        <end position="108"/>
    </location>
    <ligand>
        <name>FMN</name>
        <dbReference type="ChEBI" id="CHEBI:58210"/>
    </ligand>
</feature>
<keyword id="KW-0997">Cell inner membrane</keyword>
<keyword id="KW-1003">Cell membrane</keyword>
<keyword id="KW-0285">Flavoprotein</keyword>
<keyword id="KW-0288">FMN</keyword>
<keyword id="KW-0472">Membrane</keyword>
<keyword id="KW-0520">NAD</keyword>
<keyword id="KW-0560">Oxidoreductase</keyword>
<sequence length="176" mass="20045">MILIIYAHPYPHHSHANKRMLEQAGTLENVEIRSLYHLYPDFNIDVAAEQEALSRASLIVWQHPMQWYSVPPLLKLWMDKVLTHGWAYGHGGTALHGKHLLWAVTTGGGENHFTIGSHPGFDVLSQPLQATALYCGLKWLPPFAMHCTFICDDDTLQAQARQYKQRLLAWQEVNHG</sequence>
<accession>Q57TH5</accession>
<protein>
    <recommendedName>
        <fullName evidence="1">Glutathione-regulated potassium-efflux system ancillary protein KefF</fullName>
    </recommendedName>
    <alternativeName>
        <fullName evidence="1">Quinone oxidoreductase KefF</fullName>
        <ecNumber evidence="1">1.6.5.2</ecNumber>
    </alternativeName>
</protein>
<evidence type="ECO:0000255" key="1">
    <source>
        <dbReference type="HAMAP-Rule" id="MF_01414"/>
    </source>
</evidence>
<proteinExistence type="inferred from homology"/>
<dbReference type="EC" id="1.6.5.2" evidence="1"/>
<dbReference type="EMBL" id="AE017220">
    <property type="protein sequence ID" value="AAX63986.1"/>
    <property type="molecule type" value="Genomic_DNA"/>
</dbReference>
<dbReference type="RefSeq" id="WP_000600710.1">
    <property type="nucleotide sequence ID" value="NC_006905.1"/>
</dbReference>
<dbReference type="SMR" id="Q57TH5"/>
<dbReference type="KEGG" id="sec:SCH_0080"/>
<dbReference type="HOGENOM" id="CLU_058643_0_2_6"/>
<dbReference type="Proteomes" id="UP000000538">
    <property type="component" value="Chromosome"/>
</dbReference>
<dbReference type="GO" id="GO:0005886">
    <property type="term" value="C:plasma membrane"/>
    <property type="evidence" value="ECO:0007669"/>
    <property type="project" value="UniProtKB-SubCell"/>
</dbReference>
<dbReference type="GO" id="GO:0009055">
    <property type="term" value="F:electron transfer activity"/>
    <property type="evidence" value="ECO:0007669"/>
    <property type="project" value="TreeGrafter"/>
</dbReference>
<dbReference type="GO" id="GO:0010181">
    <property type="term" value="F:FMN binding"/>
    <property type="evidence" value="ECO:0007669"/>
    <property type="project" value="UniProtKB-UniRule"/>
</dbReference>
<dbReference type="GO" id="GO:0050136">
    <property type="term" value="F:NADH:ubiquinone reductase (non-electrogenic) activity"/>
    <property type="evidence" value="ECO:0007669"/>
    <property type="project" value="RHEA"/>
</dbReference>
<dbReference type="GO" id="GO:0008753">
    <property type="term" value="F:NADPH dehydrogenase (quinone) activity"/>
    <property type="evidence" value="ECO:0007669"/>
    <property type="project" value="RHEA"/>
</dbReference>
<dbReference type="GO" id="GO:1901381">
    <property type="term" value="P:positive regulation of potassium ion transmembrane transport"/>
    <property type="evidence" value="ECO:0007669"/>
    <property type="project" value="UniProtKB-UniRule"/>
</dbReference>
<dbReference type="GO" id="GO:0006813">
    <property type="term" value="P:potassium ion transport"/>
    <property type="evidence" value="ECO:0007669"/>
    <property type="project" value="InterPro"/>
</dbReference>
<dbReference type="FunFam" id="3.40.50.360:FF:000008">
    <property type="entry name" value="Glutathione-regulated potassium-efflux system ancillary protein KefF"/>
    <property type="match status" value="1"/>
</dbReference>
<dbReference type="Gene3D" id="3.40.50.360">
    <property type="match status" value="1"/>
</dbReference>
<dbReference type="HAMAP" id="MF_01414">
    <property type="entry name" value="K_H_efflux_KefF"/>
    <property type="match status" value="1"/>
</dbReference>
<dbReference type="InterPro" id="IPR003680">
    <property type="entry name" value="Flavodoxin_fold"/>
</dbReference>
<dbReference type="InterPro" id="IPR029039">
    <property type="entry name" value="Flavoprotein-like_sf"/>
</dbReference>
<dbReference type="InterPro" id="IPR023948">
    <property type="entry name" value="K_H_efflux_KefF"/>
</dbReference>
<dbReference type="InterPro" id="IPR046980">
    <property type="entry name" value="KefG/KefF"/>
</dbReference>
<dbReference type="NCBIfam" id="NF002044">
    <property type="entry name" value="PRK00871.1"/>
    <property type="match status" value="1"/>
</dbReference>
<dbReference type="PANTHER" id="PTHR47307:SF2">
    <property type="entry name" value="GLUTATHIONE-REGULATED POTASSIUM-EFFLUX SYSTEM ANCILLARY PROTEIN KEFF"/>
    <property type="match status" value="1"/>
</dbReference>
<dbReference type="PANTHER" id="PTHR47307">
    <property type="entry name" value="GLUTATHIONE-REGULATED POTASSIUM-EFFLUX SYSTEM ANCILLARY PROTEIN KEFG"/>
    <property type="match status" value="1"/>
</dbReference>
<dbReference type="Pfam" id="PF02525">
    <property type="entry name" value="Flavodoxin_2"/>
    <property type="match status" value="1"/>
</dbReference>
<dbReference type="SUPFAM" id="SSF52218">
    <property type="entry name" value="Flavoproteins"/>
    <property type="match status" value="1"/>
</dbReference>
<organism>
    <name type="scientific">Salmonella choleraesuis (strain SC-B67)</name>
    <dbReference type="NCBI Taxonomy" id="321314"/>
    <lineage>
        <taxon>Bacteria</taxon>
        <taxon>Pseudomonadati</taxon>
        <taxon>Pseudomonadota</taxon>
        <taxon>Gammaproteobacteria</taxon>
        <taxon>Enterobacterales</taxon>
        <taxon>Enterobacteriaceae</taxon>
        <taxon>Salmonella</taxon>
    </lineage>
</organism>
<gene>
    <name evidence="1" type="primary">kefF</name>
    <name type="ordered locus">SCH_0080</name>
</gene>
<name>KEFF_SALCH</name>